<gene>
    <name evidence="1" type="primary">pgi</name>
    <name type="ordered locus">Ava_3708</name>
</gene>
<protein>
    <recommendedName>
        <fullName evidence="1">Glucose-6-phosphate isomerase</fullName>
        <shortName evidence="1">GPI</shortName>
        <ecNumber evidence="1">5.3.1.9</ecNumber>
    </recommendedName>
    <alternativeName>
        <fullName evidence="1">Phosphoglucose isomerase</fullName>
        <shortName evidence="1">PGI</shortName>
    </alternativeName>
    <alternativeName>
        <fullName evidence="1">Phosphohexose isomerase</fullName>
        <shortName evidence="1">PHI</shortName>
    </alternativeName>
</protein>
<name>G6PI_TRIV2</name>
<accession>Q3M6S3</accession>
<organism>
    <name type="scientific">Trichormus variabilis (strain ATCC 29413 / PCC 7937)</name>
    <name type="common">Anabaena variabilis</name>
    <dbReference type="NCBI Taxonomy" id="240292"/>
    <lineage>
        <taxon>Bacteria</taxon>
        <taxon>Bacillati</taxon>
        <taxon>Cyanobacteriota</taxon>
        <taxon>Cyanophyceae</taxon>
        <taxon>Nostocales</taxon>
        <taxon>Nostocaceae</taxon>
        <taxon>Trichormus</taxon>
    </lineage>
</organism>
<keyword id="KW-0963">Cytoplasm</keyword>
<keyword id="KW-0312">Gluconeogenesis</keyword>
<keyword id="KW-0324">Glycolysis</keyword>
<keyword id="KW-0413">Isomerase</keyword>
<feature type="chain" id="PRO_0000230911" description="Glucose-6-phosphate isomerase">
    <location>
        <begin position="1"/>
        <end position="528"/>
    </location>
</feature>
<feature type="active site" description="Proton donor" evidence="1">
    <location>
        <position position="322"/>
    </location>
</feature>
<feature type="active site" evidence="1">
    <location>
        <position position="351"/>
    </location>
</feature>
<feature type="active site" evidence="1">
    <location>
        <position position="455"/>
    </location>
</feature>
<comment type="function">
    <text evidence="1">Catalyzes the reversible isomerization of glucose-6-phosphate to fructose-6-phosphate.</text>
</comment>
<comment type="catalytic activity">
    <reaction evidence="1">
        <text>alpha-D-glucose 6-phosphate = beta-D-fructose 6-phosphate</text>
        <dbReference type="Rhea" id="RHEA:11816"/>
        <dbReference type="ChEBI" id="CHEBI:57634"/>
        <dbReference type="ChEBI" id="CHEBI:58225"/>
        <dbReference type="EC" id="5.3.1.9"/>
    </reaction>
</comment>
<comment type="pathway">
    <text evidence="1">Carbohydrate biosynthesis; gluconeogenesis.</text>
</comment>
<comment type="pathway">
    <text evidence="1">Carbohydrate degradation; glycolysis; D-glyceraldehyde 3-phosphate and glycerone phosphate from D-glucose: step 2/4.</text>
</comment>
<comment type="subcellular location">
    <subcellularLocation>
        <location evidence="1">Cytoplasm</location>
    </subcellularLocation>
</comment>
<comment type="similarity">
    <text evidence="1">Belongs to the GPI family.</text>
</comment>
<sequence>MDAKALWQRYQEWLYFHEGLGLYLDVSRMRFDDAFVKSLLPKFDKAFADMAELEKGAIANPDENRMVGHYWLRNPDLAPTPEIAQEIVQTLEQIEAFAEKIQTGAIHPPKANRFTDIISIGIGGSALGPQFVAEALAPEFPPLKIHFIDNTDPAGIDKILTHLRNNLASTLVLVISKSGGTPEPRNGMIEVKKAYAGQNLDFAQYAVAITSTGSNLDKVAQAEGWLATFPMYDWVGGRTSEMSSVGLVPAALQGIDVRAMLEGAKEMDDATRVPEVKNNPAALLALSWYYSGNGKGEKDMVVLPYKDSLLLFSRYLQQLVMESLGKEKDLDGKTVYQGIAVYGNKGSTDQHAYVQQLREGVPNFFATLIEVLEDRNGASPEIDPGVTSGDYLSGFLLGTRQALYENQRDSITVTIPQVNARTVGALIALYERTVGLYASLVNINAYHQPGVEAGKKAAAVILDLQTKVVGLLQKEKTALSLEQIAEKIGAADQVEAIYKILRHLQANQRGVVFQGNLGQPSSLKVSIS</sequence>
<evidence type="ECO:0000255" key="1">
    <source>
        <dbReference type="HAMAP-Rule" id="MF_00473"/>
    </source>
</evidence>
<dbReference type="EC" id="5.3.1.9" evidence="1"/>
<dbReference type="EMBL" id="CP000117">
    <property type="protein sequence ID" value="ABA23313.1"/>
    <property type="molecule type" value="Genomic_DNA"/>
</dbReference>
<dbReference type="SMR" id="Q3M6S3"/>
<dbReference type="STRING" id="240292.Ava_3708"/>
<dbReference type="KEGG" id="ava:Ava_3708"/>
<dbReference type="eggNOG" id="COG0166">
    <property type="taxonomic scope" value="Bacteria"/>
</dbReference>
<dbReference type="HOGENOM" id="CLU_033288_0_0_3"/>
<dbReference type="UniPathway" id="UPA00109">
    <property type="reaction ID" value="UER00181"/>
</dbReference>
<dbReference type="UniPathway" id="UPA00138"/>
<dbReference type="Proteomes" id="UP000002533">
    <property type="component" value="Chromosome"/>
</dbReference>
<dbReference type="GO" id="GO:0005829">
    <property type="term" value="C:cytosol"/>
    <property type="evidence" value="ECO:0007669"/>
    <property type="project" value="TreeGrafter"/>
</dbReference>
<dbReference type="GO" id="GO:0097367">
    <property type="term" value="F:carbohydrate derivative binding"/>
    <property type="evidence" value="ECO:0007669"/>
    <property type="project" value="InterPro"/>
</dbReference>
<dbReference type="GO" id="GO:0004347">
    <property type="term" value="F:glucose-6-phosphate isomerase activity"/>
    <property type="evidence" value="ECO:0007669"/>
    <property type="project" value="UniProtKB-UniRule"/>
</dbReference>
<dbReference type="GO" id="GO:0048029">
    <property type="term" value="F:monosaccharide binding"/>
    <property type="evidence" value="ECO:0007669"/>
    <property type="project" value="TreeGrafter"/>
</dbReference>
<dbReference type="GO" id="GO:0006094">
    <property type="term" value="P:gluconeogenesis"/>
    <property type="evidence" value="ECO:0007669"/>
    <property type="project" value="UniProtKB-UniRule"/>
</dbReference>
<dbReference type="GO" id="GO:0051156">
    <property type="term" value="P:glucose 6-phosphate metabolic process"/>
    <property type="evidence" value="ECO:0007669"/>
    <property type="project" value="TreeGrafter"/>
</dbReference>
<dbReference type="GO" id="GO:0006096">
    <property type="term" value="P:glycolytic process"/>
    <property type="evidence" value="ECO:0007669"/>
    <property type="project" value="UniProtKB-UniRule"/>
</dbReference>
<dbReference type="CDD" id="cd05015">
    <property type="entry name" value="SIS_PGI_1"/>
    <property type="match status" value="1"/>
</dbReference>
<dbReference type="CDD" id="cd05016">
    <property type="entry name" value="SIS_PGI_2"/>
    <property type="match status" value="1"/>
</dbReference>
<dbReference type="FunFam" id="3.40.50.10490:FF:000021">
    <property type="entry name" value="Glucose-6-phosphate isomerase"/>
    <property type="match status" value="1"/>
</dbReference>
<dbReference type="FunFam" id="3.40.50.10490:FF:000023">
    <property type="entry name" value="Glucose-6-phosphate isomerase"/>
    <property type="match status" value="1"/>
</dbReference>
<dbReference type="Gene3D" id="3.40.50.10490">
    <property type="entry name" value="Glucose-6-phosphate isomerase like protein, domain 1"/>
    <property type="match status" value="3"/>
</dbReference>
<dbReference type="HAMAP" id="MF_00473">
    <property type="entry name" value="G6P_isomerase"/>
    <property type="match status" value="1"/>
</dbReference>
<dbReference type="InterPro" id="IPR001672">
    <property type="entry name" value="G6P_Isomerase"/>
</dbReference>
<dbReference type="InterPro" id="IPR018189">
    <property type="entry name" value="Phosphoglucose_isomerase_CS"/>
</dbReference>
<dbReference type="InterPro" id="IPR046348">
    <property type="entry name" value="SIS_dom_sf"/>
</dbReference>
<dbReference type="InterPro" id="IPR035476">
    <property type="entry name" value="SIS_PGI_1"/>
</dbReference>
<dbReference type="InterPro" id="IPR035482">
    <property type="entry name" value="SIS_PGI_2"/>
</dbReference>
<dbReference type="NCBIfam" id="NF010696">
    <property type="entry name" value="PRK14096.1"/>
    <property type="match status" value="1"/>
</dbReference>
<dbReference type="PANTHER" id="PTHR11469">
    <property type="entry name" value="GLUCOSE-6-PHOSPHATE ISOMERASE"/>
    <property type="match status" value="1"/>
</dbReference>
<dbReference type="PANTHER" id="PTHR11469:SF1">
    <property type="entry name" value="GLUCOSE-6-PHOSPHATE ISOMERASE"/>
    <property type="match status" value="1"/>
</dbReference>
<dbReference type="Pfam" id="PF00342">
    <property type="entry name" value="PGI"/>
    <property type="match status" value="2"/>
</dbReference>
<dbReference type="PRINTS" id="PR00662">
    <property type="entry name" value="G6PISOMERASE"/>
</dbReference>
<dbReference type="SUPFAM" id="SSF53697">
    <property type="entry name" value="SIS domain"/>
    <property type="match status" value="1"/>
</dbReference>
<dbReference type="PROSITE" id="PS00174">
    <property type="entry name" value="P_GLUCOSE_ISOMERASE_2"/>
    <property type="match status" value="1"/>
</dbReference>
<dbReference type="PROSITE" id="PS51463">
    <property type="entry name" value="P_GLUCOSE_ISOMERASE_3"/>
    <property type="match status" value="1"/>
</dbReference>
<proteinExistence type="inferred from homology"/>
<reference key="1">
    <citation type="journal article" date="2014" name="Stand. Genomic Sci.">
        <title>Complete genome sequence of Anabaena variabilis ATCC 29413.</title>
        <authorList>
            <person name="Thiel T."/>
            <person name="Pratte B.S."/>
            <person name="Zhong J."/>
            <person name="Goodwin L."/>
            <person name="Copeland A."/>
            <person name="Lucas S."/>
            <person name="Han C."/>
            <person name="Pitluck S."/>
            <person name="Land M.L."/>
            <person name="Kyrpides N.C."/>
            <person name="Woyke T."/>
        </authorList>
    </citation>
    <scope>NUCLEOTIDE SEQUENCE [LARGE SCALE GENOMIC DNA]</scope>
    <source>
        <strain>ATCC 29413 / PCC 7937</strain>
    </source>
</reference>